<accession>B5BKK4</accession>
<gene>
    <name evidence="1" type="primary">ulaD</name>
    <name type="ordered locus">SSPA3903</name>
</gene>
<keyword id="KW-0119">Carbohydrate metabolism</keyword>
<keyword id="KW-0210">Decarboxylase</keyword>
<keyword id="KW-0456">Lyase</keyword>
<keyword id="KW-0460">Magnesium</keyword>
<keyword id="KW-0479">Metal-binding</keyword>
<proteinExistence type="inferred from homology"/>
<reference key="1">
    <citation type="journal article" date="2009" name="BMC Genomics">
        <title>Pseudogene accumulation in the evolutionary histories of Salmonella enterica serovars Paratyphi A and Typhi.</title>
        <authorList>
            <person name="Holt K.E."/>
            <person name="Thomson N.R."/>
            <person name="Wain J."/>
            <person name="Langridge G.C."/>
            <person name="Hasan R."/>
            <person name="Bhutta Z.A."/>
            <person name="Quail M.A."/>
            <person name="Norbertczak H."/>
            <person name="Walker D."/>
            <person name="Simmonds M."/>
            <person name="White B."/>
            <person name="Bason N."/>
            <person name="Mungall K."/>
            <person name="Dougan G."/>
            <person name="Parkhill J."/>
        </authorList>
    </citation>
    <scope>NUCLEOTIDE SEQUENCE [LARGE SCALE GENOMIC DNA]</scope>
    <source>
        <strain>AKU_12601</strain>
    </source>
</reference>
<protein>
    <recommendedName>
        <fullName evidence="1">3-keto-L-gulonate-6-phosphate decarboxylase UlaD</fullName>
        <ecNumber evidence="1">4.1.1.85</ecNumber>
    </recommendedName>
    <alternativeName>
        <fullName evidence="1">3-dehydro-L-gulonate-6-phosphate decarboxylase</fullName>
    </alternativeName>
    <alternativeName>
        <fullName evidence="1">KGPDC</fullName>
    </alternativeName>
    <alternativeName>
        <fullName evidence="1">L-ascorbate utilization protein D</fullName>
    </alternativeName>
</protein>
<evidence type="ECO:0000255" key="1">
    <source>
        <dbReference type="HAMAP-Rule" id="MF_01267"/>
    </source>
</evidence>
<dbReference type="EC" id="4.1.1.85" evidence="1"/>
<dbReference type="EMBL" id="FM200053">
    <property type="protein sequence ID" value="CAR62189.1"/>
    <property type="molecule type" value="Genomic_DNA"/>
</dbReference>
<dbReference type="RefSeq" id="WP_000056761.1">
    <property type="nucleotide sequence ID" value="NC_011147.1"/>
</dbReference>
<dbReference type="SMR" id="B5BKK4"/>
<dbReference type="KEGG" id="sek:SSPA3903"/>
<dbReference type="HOGENOM" id="CLU_081825_0_0_6"/>
<dbReference type="UniPathway" id="UPA00263">
    <property type="reaction ID" value="UER00378"/>
</dbReference>
<dbReference type="Proteomes" id="UP000001869">
    <property type="component" value="Chromosome"/>
</dbReference>
<dbReference type="GO" id="GO:0033982">
    <property type="term" value="F:3-dehydro-L-gulonate-6-phosphate decarboxylase activity"/>
    <property type="evidence" value="ECO:0007669"/>
    <property type="project" value="UniProtKB-EC"/>
</dbReference>
<dbReference type="GO" id="GO:0000287">
    <property type="term" value="F:magnesium ion binding"/>
    <property type="evidence" value="ECO:0007669"/>
    <property type="project" value="UniProtKB-UniRule"/>
</dbReference>
<dbReference type="GO" id="GO:0004590">
    <property type="term" value="F:orotidine-5'-phosphate decarboxylase activity"/>
    <property type="evidence" value="ECO:0007669"/>
    <property type="project" value="InterPro"/>
</dbReference>
<dbReference type="GO" id="GO:0006207">
    <property type="term" value="P:'de novo' pyrimidine nucleobase biosynthetic process"/>
    <property type="evidence" value="ECO:0007669"/>
    <property type="project" value="InterPro"/>
</dbReference>
<dbReference type="GO" id="GO:0019854">
    <property type="term" value="P:L-ascorbic acid catabolic process"/>
    <property type="evidence" value="ECO:0007669"/>
    <property type="project" value="UniProtKB-UniRule"/>
</dbReference>
<dbReference type="CDD" id="cd04726">
    <property type="entry name" value="KGPDC_HPS"/>
    <property type="match status" value="1"/>
</dbReference>
<dbReference type="FunFam" id="3.20.20.70:FF:000022">
    <property type="entry name" value="3-keto-L-gulonate-6-phosphate decarboxylase UlaD"/>
    <property type="match status" value="1"/>
</dbReference>
<dbReference type="Gene3D" id="3.20.20.70">
    <property type="entry name" value="Aldolase class I"/>
    <property type="match status" value="1"/>
</dbReference>
<dbReference type="HAMAP" id="MF_01267">
    <property type="entry name" value="UlaD"/>
    <property type="match status" value="1"/>
</dbReference>
<dbReference type="InterPro" id="IPR023942">
    <property type="entry name" value="3-keto-L-gulonate6Pdecase_UlaD"/>
</dbReference>
<dbReference type="InterPro" id="IPR013785">
    <property type="entry name" value="Aldolase_TIM"/>
</dbReference>
<dbReference type="InterPro" id="IPR041710">
    <property type="entry name" value="HPS/KGPDC"/>
</dbReference>
<dbReference type="InterPro" id="IPR001754">
    <property type="entry name" value="OMPdeCOase_dom"/>
</dbReference>
<dbReference type="InterPro" id="IPR011060">
    <property type="entry name" value="RibuloseP-bd_barrel"/>
</dbReference>
<dbReference type="NCBIfam" id="NF009832">
    <property type="entry name" value="PRK13306.1"/>
    <property type="match status" value="1"/>
</dbReference>
<dbReference type="PANTHER" id="PTHR35039">
    <property type="entry name" value="3-KETO-L-GULONATE-6-PHOSPHATE DECARBOXYLASE SGBH-RELATED"/>
    <property type="match status" value="1"/>
</dbReference>
<dbReference type="PANTHER" id="PTHR35039:SF3">
    <property type="entry name" value="3-KETO-L-GULONATE-6-PHOSPHATE DECARBOXYLASE SGBH-RELATED"/>
    <property type="match status" value="1"/>
</dbReference>
<dbReference type="Pfam" id="PF00215">
    <property type="entry name" value="OMPdecase"/>
    <property type="match status" value="1"/>
</dbReference>
<dbReference type="SMART" id="SM00934">
    <property type="entry name" value="OMPdecase"/>
    <property type="match status" value="1"/>
</dbReference>
<dbReference type="SUPFAM" id="SSF51366">
    <property type="entry name" value="Ribulose-phoshate binding barrel"/>
    <property type="match status" value="1"/>
</dbReference>
<organism>
    <name type="scientific">Salmonella paratyphi A (strain AKU_12601)</name>
    <dbReference type="NCBI Taxonomy" id="554290"/>
    <lineage>
        <taxon>Bacteria</taxon>
        <taxon>Pseudomonadati</taxon>
        <taxon>Pseudomonadota</taxon>
        <taxon>Gammaproteobacteria</taxon>
        <taxon>Enterobacterales</taxon>
        <taxon>Enterobacteriaceae</taxon>
        <taxon>Salmonella</taxon>
    </lineage>
</organism>
<name>ULAD_SALPK</name>
<sequence length="216" mass="23706">MSLPMLQVALDNQTMDSAYETTRLIAEEVDIIEVGTILCVGEGVRAVRDLKALYPHKIVLADAKIADAGKILSRMCFEANADWVTVICCADINTAKGALDVAKEFNGDVQIELTGYWTWEQAQQWRDAGIQQVVYHRSRDAQAAGVAWGEADITAIKRLSDMGFKVTVTGGLALEDLPLFKGIPIHVFIAGRSIRDAESPVEAARQFKRSIAQLWG</sequence>
<feature type="chain" id="PRO_1000140124" description="3-keto-L-gulonate-6-phosphate decarboxylase UlaD">
    <location>
        <begin position="1"/>
        <end position="216"/>
    </location>
</feature>
<feature type="binding site" evidence="1">
    <location>
        <position position="11"/>
    </location>
    <ligand>
        <name>substrate</name>
    </ligand>
</feature>
<feature type="binding site" evidence="1">
    <location>
        <position position="33"/>
    </location>
    <ligand>
        <name>Mg(2+)</name>
        <dbReference type="ChEBI" id="CHEBI:18420"/>
    </ligand>
</feature>
<feature type="binding site" evidence="1">
    <location>
        <position position="62"/>
    </location>
    <ligand>
        <name>Mg(2+)</name>
        <dbReference type="ChEBI" id="CHEBI:18420"/>
    </ligand>
</feature>
<feature type="binding site" evidence="1">
    <location>
        <position position="192"/>
    </location>
    <ligand>
        <name>substrate</name>
    </ligand>
</feature>
<feature type="site" description="Transition state stabilizer" evidence="1">
    <location>
        <position position="64"/>
    </location>
</feature>
<feature type="site" description="Transition state stabilizer" evidence="1">
    <location>
        <position position="67"/>
    </location>
</feature>
<comment type="function">
    <text evidence="1">Catalyzes the decarboxylation of 3-keto-L-gulonate-6-P into L-xylulose-5-P. Is involved in the anaerobic L-ascorbate utilization.</text>
</comment>
<comment type="catalytic activity">
    <reaction evidence="1">
        <text>3-dehydro-L-gulonate 6-phosphate + H(+) = L-xylulose 5-phosphate + CO2</text>
        <dbReference type="Rhea" id="RHEA:14353"/>
        <dbReference type="ChEBI" id="CHEBI:15378"/>
        <dbReference type="ChEBI" id="CHEBI:16526"/>
        <dbReference type="ChEBI" id="CHEBI:57829"/>
        <dbReference type="ChEBI" id="CHEBI:58774"/>
        <dbReference type="EC" id="4.1.1.85"/>
    </reaction>
</comment>
<comment type="cofactor">
    <cofactor evidence="1">
        <name>Mg(2+)</name>
        <dbReference type="ChEBI" id="CHEBI:18420"/>
    </cofactor>
    <text evidence="1">Binds 1 Mg(2+) ion per subunit.</text>
</comment>
<comment type="pathway">
    <text evidence="1">Cofactor degradation; L-ascorbate degradation; D-xylulose 5-phosphate from L-ascorbate: step 2/4.</text>
</comment>
<comment type="subunit">
    <text evidence="1">Homodimer.</text>
</comment>
<comment type="induction">
    <text evidence="1">Induced by L-ascorbate. Repressed by UlaR.</text>
</comment>
<comment type="similarity">
    <text evidence="1">Belongs to the HPS/KGPDC family. KGPDC subfamily.</text>
</comment>